<feature type="chain" id="PRO_0000402045" description="Methylthioribose-1-phosphate isomerase">
    <location>
        <begin position="1"/>
        <end position="386"/>
    </location>
</feature>
<feature type="active site" description="Proton donor" evidence="1">
    <location>
        <position position="258"/>
    </location>
</feature>
<feature type="site" description="Transition state stabilizer" evidence="1">
    <location>
        <position position="178"/>
    </location>
</feature>
<organism>
    <name type="scientific">Postia placenta (strain ATCC 44394 / Madison 698-R)</name>
    <name type="common">Brown rot fungus</name>
    <name type="synonym">Poria monticola</name>
    <dbReference type="NCBI Taxonomy" id="561896"/>
    <lineage>
        <taxon>Eukaryota</taxon>
        <taxon>Fungi</taxon>
        <taxon>Dikarya</taxon>
        <taxon>Basidiomycota</taxon>
        <taxon>Agaricomycotina</taxon>
        <taxon>Agaricomycetes</taxon>
        <taxon>Polyporales</taxon>
        <taxon>Adustoporiaceae</taxon>
        <taxon>Rhodonia</taxon>
    </lineage>
</organism>
<sequence>MPGLTSIRTSEGKIEIVNQLLLPHTTEFIEISTIEQAHDAIKSMKIRGAPAIASLAALTIASHLSRALQADPSPDFLTSPLTLQEHVEGHLSYINTARPTAVNLGAATRRLSNILEQSVRAGKDARAIAEDLIREGKEIDEEDVGRNKQMSRHGAEWLLEQWAAKGLSGSNLNVMTVCNTGSLATSGYGTALGLITHLHETGRLQRAFYTQSTPYHQGSRLTAFELQTLNIPSTMLCDSMVGSLFQSHGIHAVAVGADRITRDGDTANKVGTYNAAVLAARHKIPFIVVAPVSTVDLDIADGSSIPIEHRPALEACVVRGALYPVRTDAEGLKEQATVMITPEGLDGVYNPSFDVTPAELITAIVTEKGVAVKRDGESTFDLTSIV</sequence>
<gene>
    <name evidence="1" type="primary">MRI1</name>
    <name type="ORF">POSPLDRAFT_134883</name>
</gene>
<keyword id="KW-0028">Amino-acid biosynthesis</keyword>
<keyword id="KW-0963">Cytoplasm</keyword>
<keyword id="KW-0413">Isomerase</keyword>
<keyword id="KW-0486">Methionine biosynthesis</keyword>
<keyword id="KW-0539">Nucleus</keyword>
<protein>
    <recommendedName>
        <fullName evidence="1">Methylthioribose-1-phosphate isomerase</fullName>
        <shortName evidence="1">M1Pi</shortName>
        <shortName evidence="1">MTR-1-P isomerase</shortName>
        <ecNumber evidence="1">5.3.1.23</ecNumber>
    </recommendedName>
    <alternativeName>
        <fullName evidence="1">S-methyl-5-thioribose-1-phosphate isomerase</fullName>
    </alternativeName>
    <alternativeName>
        <fullName evidence="1">Translation initiation factor eIF-2B subunit alpha/beta/delta-like protein</fullName>
    </alternativeName>
</protein>
<comment type="function">
    <text evidence="1">Catalyzes the interconversion of methylthioribose-1-phosphate (MTR-1-P) into methylthioribulose-1-phosphate (MTRu-1-P).</text>
</comment>
<comment type="catalytic activity">
    <reaction evidence="1">
        <text>5-(methylsulfanyl)-alpha-D-ribose 1-phosphate = 5-(methylsulfanyl)-D-ribulose 1-phosphate</text>
        <dbReference type="Rhea" id="RHEA:19989"/>
        <dbReference type="ChEBI" id="CHEBI:58533"/>
        <dbReference type="ChEBI" id="CHEBI:58548"/>
        <dbReference type="EC" id="5.3.1.23"/>
    </reaction>
</comment>
<comment type="pathway">
    <text evidence="1">Amino-acid biosynthesis; L-methionine biosynthesis via salvage pathway; L-methionine from S-methyl-5-thio-alpha-D-ribose 1-phosphate: step 1/6.</text>
</comment>
<comment type="subcellular location">
    <subcellularLocation>
        <location evidence="1">Cytoplasm</location>
    </subcellularLocation>
    <subcellularLocation>
        <location evidence="1">Nucleus</location>
    </subcellularLocation>
</comment>
<comment type="similarity">
    <text evidence="1">Belongs to the eIF-2B alpha/beta/delta subunits family. MtnA subfamily.</text>
</comment>
<evidence type="ECO:0000255" key="1">
    <source>
        <dbReference type="HAMAP-Rule" id="MF_03119"/>
    </source>
</evidence>
<dbReference type="EC" id="5.3.1.23" evidence="1"/>
<dbReference type="EMBL" id="EQ966304">
    <property type="protein sequence ID" value="EED81678.1"/>
    <property type="molecule type" value="Genomic_DNA"/>
</dbReference>
<dbReference type="RefSeq" id="XP_002473108.1">
    <property type="nucleotide sequence ID" value="XM_002473063.1"/>
</dbReference>
<dbReference type="SMR" id="B8PBR2"/>
<dbReference type="FunCoup" id="B8PBR2">
    <property type="interactions" value="119"/>
</dbReference>
<dbReference type="STRING" id="561896.B8PBR2"/>
<dbReference type="KEGG" id="ppl:POSPLDRAFT_134883"/>
<dbReference type="HOGENOM" id="CLU_016218_1_3_1"/>
<dbReference type="InParanoid" id="B8PBR2"/>
<dbReference type="OMA" id="CETRPLN"/>
<dbReference type="OrthoDB" id="2461at2759"/>
<dbReference type="UniPathway" id="UPA00904">
    <property type="reaction ID" value="UER00874"/>
</dbReference>
<dbReference type="GO" id="GO:0005737">
    <property type="term" value="C:cytoplasm"/>
    <property type="evidence" value="ECO:0007669"/>
    <property type="project" value="UniProtKB-SubCell"/>
</dbReference>
<dbReference type="GO" id="GO:0005634">
    <property type="term" value="C:nucleus"/>
    <property type="evidence" value="ECO:0007669"/>
    <property type="project" value="UniProtKB-SubCell"/>
</dbReference>
<dbReference type="GO" id="GO:0046523">
    <property type="term" value="F:S-methyl-5-thioribose-1-phosphate isomerase activity"/>
    <property type="evidence" value="ECO:0007669"/>
    <property type="project" value="UniProtKB-UniRule"/>
</dbReference>
<dbReference type="GO" id="GO:0019509">
    <property type="term" value="P:L-methionine salvage from methylthioadenosine"/>
    <property type="evidence" value="ECO:0007669"/>
    <property type="project" value="UniProtKB-UniRule"/>
</dbReference>
<dbReference type="FunFam" id="1.20.120.420:FF:000003">
    <property type="entry name" value="Methylthioribose-1-phosphate isomerase"/>
    <property type="match status" value="1"/>
</dbReference>
<dbReference type="FunFam" id="3.40.50.10470:FF:000006">
    <property type="entry name" value="Methylthioribose-1-phosphate isomerase"/>
    <property type="match status" value="1"/>
</dbReference>
<dbReference type="Gene3D" id="1.20.120.420">
    <property type="entry name" value="translation initiation factor eif-2b, domain 1"/>
    <property type="match status" value="1"/>
</dbReference>
<dbReference type="Gene3D" id="3.40.50.10470">
    <property type="entry name" value="Translation initiation factor eif-2b, domain 2"/>
    <property type="match status" value="1"/>
</dbReference>
<dbReference type="HAMAP" id="MF_01678">
    <property type="entry name" value="Salvage_MtnA"/>
    <property type="match status" value="1"/>
</dbReference>
<dbReference type="InterPro" id="IPR000649">
    <property type="entry name" value="IF-2B-related"/>
</dbReference>
<dbReference type="InterPro" id="IPR005251">
    <property type="entry name" value="IF-M1Pi"/>
</dbReference>
<dbReference type="InterPro" id="IPR042529">
    <property type="entry name" value="IF_2B-like_C"/>
</dbReference>
<dbReference type="InterPro" id="IPR011559">
    <property type="entry name" value="Initiation_fac_2B_a/b/d"/>
</dbReference>
<dbReference type="InterPro" id="IPR027363">
    <property type="entry name" value="M1Pi_N"/>
</dbReference>
<dbReference type="InterPro" id="IPR037171">
    <property type="entry name" value="NagB/RpiA_transferase-like"/>
</dbReference>
<dbReference type="NCBIfam" id="TIGR00524">
    <property type="entry name" value="eIF-2B_rel"/>
    <property type="match status" value="1"/>
</dbReference>
<dbReference type="NCBIfam" id="NF004326">
    <property type="entry name" value="PRK05720.1"/>
    <property type="match status" value="1"/>
</dbReference>
<dbReference type="NCBIfam" id="TIGR00512">
    <property type="entry name" value="salvage_mtnA"/>
    <property type="match status" value="1"/>
</dbReference>
<dbReference type="PANTHER" id="PTHR43475">
    <property type="entry name" value="METHYLTHIORIBOSE-1-PHOSPHATE ISOMERASE"/>
    <property type="match status" value="1"/>
</dbReference>
<dbReference type="PANTHER" id="PTHR43475:SF1">
    <property type="entry name" value="METHYLTHIORIBOSE-1-PHOSPHATE ISOMERASE"/>
    <property type="match status" value="1"/>
</dbReference>
<dbReference type="Pfam" id="PF01008">
    <property type="entry name" value="IF-2B"/>
    <property type="match status" value="1"/>
</dbReference>
<dbReference type="SUPFAM" id="SSF100950">
    <property type="entry name" value="NagB/RpiA/CoA transferase-like"/>
    <property type="match status" value="1"/>
</dbReference>
<name>MTNA_POSPM</name>
<reference key="1">
    <citation type="journal article" date="2009" name="Proc. Natl. Acad. Sci. U.S.A.">
        <title>Genome, transcriptome, and secretome analysis of wood decay fungus Postia placenta supports unique mechanisms of lignocellulose conversion.</title>
        <authorList>
            <person name="Martinez D."/>
            <person name="Challacombe J."/>
            <person name="Morgenstern I."/>
            <person name="Hibbett D."/>
            <person name="Schmoll M."/>
            <person name="Kubicek C.P."/>
            <person name="Ferreira P."/>
            <person name="Ruiz-Duenas F.J."/>
            <person name="Martinez A.T."/>
            <person name="Kersten P."/>
            <person name="Hammel K.E."/>
            <person name="Vanden Wymelenberg A."/>
            <person name="Gaskell J."/>
            <person name="Lindquist E."/>
            <person name="Sabat G."/>
            <person name="Splinter BonDurant S."/>
            <person name="Larrondo L.F."/>
            <person name="Canessa P."/>
            <person name="Vicuna R."/>
            <person name="Yadav J."/>
            <person name="Doddapaneni H."/>
            <person name="Subramanian V."/>
            <person name="Pisabarro A.G."/>
            <person name="Lavin J.L."/>
            <person name="Oguiza J.A."/>
            <person name="Master E."/>
            <person name="Henrissat B."/>
            <person name="Coutinho P.M."/>
            <person name="Harris P."/>
            <person name="Magnuson J.K."/>
            <person name="Baker S.E."/>
            <person name="Bruno K."/>
            <person name="Kenealy W."/>
            <person name="Hoegger P.J."/>
            <person name="Kuees U."/>
            <person name="Ramaiya P."/>
            <person name="Lucas S."/>
            <person name="Salamov A."/>
            <person name="Shapiro H."/>
            <person name="Tu H."/>
            <person name="Chee C.L."/>
            <person name="Misra M."/>
            <person name="Xie G."/>
            <person name="Teter S."/>
            <person name="Yaver D."/>
            <person name="James T."/>
            <person name="Mokrejs M."/>
            <person name="Pospisek M."/>
            <person name="Grigoriev I.V."/>
            <person name="Brettin T."/>
            <person name="Rokhsar D."/>
            <person name="Berka R."/>
            <person name="Cullen D."/>
        </authorList>
    </citation>
    <scope>NUCLEOTIDE SEQUENCE [LARGE SCALE GENOMIC DNA]</scope>
    <source>
        <strain>ATCC 44394 / Madison 698-R</strain>
    </source>
</reference>
<accession>B8PBR2</accession>
<proteinExistence type="inferred from homology"/>